<evidence type="ECO:0000256" key="1">
    <source>
        <dbReference type="SAM" id="MobiDB-lite"/>
    </source>
</evidence>
<evidence type="ECO:0000269" key="2">
    <source>
    </source>
</evidence>
<evidence type="ECO:0000269" key="3">
    <source>
    </source>
</evidence>
<evidence type="ECO:0000269" key="4">
    <source>
    </source>
</evidence>
<evidence type="ECO:0000269" key="5">
    <source>
    </source>
</evidence>
<evidence type="ECO:0000303" key="6">
    <source>
    </source>
</evidence>
<evidence type="ECO:0000305" key="7"/>
<evidence type="ECO:0007744" key="8">
    <source>
    </source>
</evidence>
<evidence type="ECO:0007744" key="9">
    <source>
    </source>
</evidence>
<evidence type="ECO:0007744" key="10">
    <source>
    </source>
</evidence>
<evidence type="ECO:0007744" key="11">
    <source>
    </source>
</evidence>
<evidence type="ECO:0007744" key="12">
    <source>
    </source>
</evidence>
<evidence type="ECO:0007829" key="13">
    <source>
        <dbReference type="PDB" id="5LSI"/>
    </source>
</evidence>
<evidence type="ECO:0007829" key="14">
    <source>
        <dbReference type="PDB" id="8PPR"/>
    </source>
</evidence>
<protein>
    <recommendedName>
        <fullName>Kinetochore-associated protein DSN1 homolog</fullName>
    </recommendedName>
</protein>
<feature type="chain" id="PRO_0000079481" description="Kinetochore-associated protein DSN1 homolog">
    <location>
        <begin position="1"/>
        <end position="356"/>
    </location>
</feature>
<feature type="region of interest" description="Disordered" evidence="1">
    <location>
        <begin position="1"/>
        <end position="28"/>
    </location>
</feature>
<feature type="region of interest" description="Disordered" evidence="1">
    <location>
        <begin position="73"/>
        <end position="93"/>
    </location>
</feature>
<feature type="compositionally biased region" description="Basic and acidic residues" evidence="1">
    <location>
        <begin position="8"/>
        <end position="25"/>
    </location>
</feature>
<feature type="compositionally biased region" description="Polar residues" evidence="1">
    <location>
        <begin position="75"/>
        <end position="89"/>
    </location>
</feature>
<feature type="modified residue" description="Phosphoserine" evidence="8">
    <location>
        <position position="28"/>
    </location>
</feature>
<feature type="modified residue" description="Phosphoserine" evidence="8 9 10 11">
    <location>
        <position position="30"/>
    </location>
</feature>
<feature type="modified residue" description="Phosphoserine" evidence="10">
    <location>
        <position position="58"/>
    </location>
</feature>
<feature type="modified residue" description="Phosphoserine" evidence="8 11">
    <location>
        <position position="77"/>
    </location>
</feature>
<feature type="modified residue" description="Phosphoserine" evidence="8 10 11">
    <location>
        <position position="81"/>
    </location>
</feature>
<feature type="modified residue" description="Phosphoserine" evidence="11">
    <location>
        <position position="109"/>
    </location>
</feature>
<feature type="modified residue" description="Phosphoserine" evidence="11">
    <location>
        <position position="125"/>
    </location>
</feature>
<feature type="modified residue" description="Phosphoserine" evidence="11">
    <location>
        <position position="331"/>
    </location>
</feature>
<feature type="cross-link" description="Glycyl lysine isopeptide (Lys-Gly) (interchain with G-Cter in SUMO2)" evidence="12">
    <location>
        <position position="253"/>
    </location>
</feature>
<feature type="splice variant" id="VSP_003826" description="In isoform 2." evidence="6">
    <original>MTSVTRSEIIDEKGPVMSKTHDHQLESSLSPVEVFAKTSASLEMNQGVSEERIHLGSSPKKGGNCDLSHQERLQSKSLHLSPQE</original>
    <variation>MIINWNQVSVLWKCLLK</variation>
    <location>
        <begin position="1"/>
        <end position="84"/>
    </location>
</feature>
<feature type="splice variant" id="VSP_044281" description="In isoform 4." evidence="6">
    <location>
        <begin position="1"/>
        <end position="16"/>
    </location>
</feature>
<feature type="splice variant" id="VSP_043204" description="In isoform 3." evidence="6">
    <location>
        <begin position="12"/>
        <end position="118"/>
    </location>
</feature>
<feature type="sequence conflict" description="In Ref. 1; BAC04024." evidence="7" ref="1">
    <original>F</original>
    <variation>S</variation>
    <location>
        <position position="142"/>
    </location>
</feature>
<feature type="helix" evidence="14">
    <location>
        <begin position="98"/>
        <end position="102"/>
    </location>
</feature>
<feature type="strand" evidence="14">
    <location>
        <begin position="115"/>
        <end position="117"/>
    </location>
</feature>
<feature type="helix" evidence="13">
    <location>
        <begin position="119"/>
        <end position="122"/>
    </location>
</feature>
<feature type="helix" evidence="13">
    <location>
        <begin position="130"/>
        <end position="149"/>
    </location>
</feature>
<feature type="helix" evidence="13">
    <location>
        <begin position="150"/>
        <end position="152"/>
    </location>
</feature>
<feature type="turn" evidence="14">
    <location>
        <begin position="153"/>
        <end position="155"/>
    </location>
</feature>
<feature type="helix" evidence="13">
    <location>
        <begin position="161"/>
        <end position="184"/>
    </location>
</feature>
<feature type="helix" evidence="13">
    <location>
        <begin position="189"/>
        <end position="192"/>
    </location>
</feature>
<feature type="helix" evidence="14">
    <location>
        <begin position="198"/>
        <end position="245"/>
    </location>
</feature>
<feature type="helix" evidence="14">
    <location>
        <begin position="256"/>
        <end position="259"/>
    </location>
</feature>
<feature type="helix" evidence="14">
    <location>
        <begin position="265"/>
        <end position="269"/>
    </location>
</feature>
<feature type="helix" evidence="14">
    <location>
        <begin position="275"/>
        <end position="325"/>
    </location>
</feature>
<feature type="helix" evidence="14">
    <location>
        <begin position="332"/>
        <end position="337"/>
    </location>
</feature>
<organism>
    <name type="scientific">Homo sapiens</name>
    <name type="common">Human</name>
    <dbReference type="NCBI Taxonomy" id="9606"/>
    <lineage>
        <taxon>Eukaryota</taxon>
        <taxon>Metazoa</taxon>
        <taxon>Chordata</taxon>
        <taxon>Craniata</taxon>
        <taxon>Vertebrata</taxon>
        <taxon>Euteleostomi</taxon>
        <taxon>Mammalia</taxon>
        <taxon>Eutheria</taxon>
        <taxon>Euarchontoglires</taxon>
        <taxon>Primates</taxon>
        <taxon>Haplorrhini</taxon>
        <taxon>Catarrhini</taxon>
        <taxon>Hominidae</taxon>
        <taxon>Homo</taxon>
    </lineage>
</organism>
<sequence length="356" mass="40067">MTSVTRSEIIDEKGPVMSKTHDHQLESSLSPVEVFAKTSASLEMNQGVSEERIHLGSSPKKGGNCDLSHQERLQSKSLHLSPQEQSASYQDRRQSWRRASMKETNRRKSLHPIHQGITELSRSISVDLAESKRLGCLLLSSFQFSIQKLEPFLRDTKGFSLESFRAKASSLSEELKHFADGLETDGTLQKCFEDSNGKASDFSLEASVAEMKEYITKFSLERQTWDQLLLHYQQEAKEILSRGSTEAKITEVKVEPMTYLGSSQNEVLNTKPDYQKILQNQSKVFDCMELVMDELQGSVKQLQAFMDESTQCFQKVSVQLGKRSMQQLDPSPARKLLKLQLQNPPAIHGSGSGSCQ</sequence>
<name>DSN1_HUMAN</name>
<keyword id="KW-0002">3D-structure</keyword>
<keyword id="KW-0025">Alternative splicing</keyword>
<keyword id="KW-0131">Cell cycle</keyword>
<keyword id="KW-0132">Cell division</keyword>
<keyword id="KW-0137">Centromere</keyword>
<keyword id="KW-0158">Chromosome</keyword>
<keyword id="KW-0159">Chromosome partition</keyword>
<keyword id="KW-1017">Isopeptide bond</keyword>
<keyword id="KW-0995">Kinetochore</keyword>
<keyword id="KW-0498">Mitosis</keyword>
<keyword id="KW-0539">Nucleus</keyword>
<keyword id="KW-0597">Phosphoprotein</keyword>
<keyword id="KW-1267">Proteomics identification</keyword>
<keyword id="KW-1185">Reference proteome</keyword>
<keyword id="KW-0832">Ubl conjugation</keyword>
<dbReference type="EMBL" id="AK093031">
    <property type="protein sequence ID" value="BAC04024.1"/>
    <property type="molecule type" value="mRNA"/>
</dbReference>
<dbReference type="EMBL" id="AK023408">
    <property type="protein sequence ID" value="BAB14564.1"/>
    <property type="status" value="ALT_FRAME"/>
    <property type="molecule type" value="mRNA"/>
</dbReference>
<dbReference type="EMBL" id="AK301671">
    <property type="protein sequence ID" value="BAG63144.1"/>
    <property type="molecule type" value="mRNA"/>
</dbReference>
<dbReference type="EMBL" id="AK301840">
    <property type="protein sequence ID" value="BAG63283.1"/>
    <property type="molecule type" value="mRNA"/>
</dbReference>
<dbReference type="EMBL" id="AL132768">
    <property type="status" value="NOT_ANNOTATED_CDS"/>
    <property type="molecule type" value="Genomic_DNA"/>
</dbReference>
<dbReference type="EMBL" id="CH471077">
    <property type="protein sequence ID" value="EAW76101.1"/>
    <property type="molecule type" value="Genomic_DNA"/>
</dbReference>
<dbReference type="EMBL" id="CH471077">
    <property type="protein sequence ID" value="EAW76102.1"/>
    <property type="molecule type" value="Genomic_DNA"/>
</dbReference>
<dbReference type="EMBL" id="CH471077">
    <property type="protein sequence ID" value="EAW76104.1"/>
    <property type="molecule type" value="Genomic_DNA"/>
</dbReference>
<dbReference type="EMBL" id="CH471077">
    <property type="protein sequence ID" value="EAW76106.1"/>
    <property type="molecule type" value="Genomic_DNA"/>
</dbReference>
<dbReference type="EMBL" id="BC058899">
    <property type="protein sequence ID" value="AAH58899.1"/>
    <property type="molecule type" value="mRNA"/>
</dbReference>
<dbReference type="CCDS" id="CCDS13286.1">
    <molecule id="Q9H410-1"/>
</dbReference>
<dbReference type="CCDS" id="CCDS46596.1">
    <molecule id="Q9H410-3"/>
</dbReference>
<dbReference type="CCDS" id="CCDS46597.1">
    <molecule id="Q9H410-4"/>
</dbReference>
<dbReference type="RefSeq" id="NP_001138787.1">
    <molecule id="Q9H410-1"/>
    <property type="nucleotide sequence ID" value="NM_001145315.2"/>
</dbReference>
<dbReference type="RefSeq" id="NP_001138788.1">
    <molecule id="Q9H410-1"/>
    <property type="nucleotide sequence ID" value="NM_001145316.2"/>
</dbReference>
<dbReference type="RefSeq" id="NP_001138789.1">
    <molecule id="Q9H410-3"/>
    <property type="nucleotide sequence ID" value="NM_001145317.2"/>
</dbReference>
<dbReference type="RefSeq" id="NP_001138790.1">
    <molecule id="Q9H410-4"/>
    <property type="nucleotide sequence ID" value="NM_001145318.2"/>
</dbReference>
<dbReference type="RefSeq" id="NP_079194.3">
    <molecule id="Q9H410-1"/>
    <property type="nucleotide sequence ID" value="NM_024918.3"/>
</dbReference>
<dbReference type="RefSeq" id="XP_006723939.1">
    <molecule id="Q9H410-3"/>
    <property type="nucleotide sequence ID" value="XM_006723876.3"/>
</dbReference>
<dbReference type="RefSeq" id="XP_054180013.1">
    <molecule id="Q9H410-3"/>
    <property type="nucleotide sequence ID" value="XM_054324038.1"/>
</dbReference>
<dbReference type="PDB" id="5LSI">
    <property type="method" value="X-ray"/>
    <property type="resolution" value="2.00 A"/>
    <property type="chains" value="D=68-200"/>
</dbReference>
<dbReference type="PDB" id="5LSJ">
    <property type="method" value="X-ray"/>
    <property type="resolution" value="3.25 A"/>
    <property type="chains" value="D/F=186-356"/>
</dbReference>
<dbReference type="PDB" id="5LSK">
    <property type="method" value="X-ray"/>
    <property type="resolution" value="3.50 A"/>
    <property type="chains" value="D=68-356"/>
</dbReference>
<dbReference type="PDB" id="8PPR">
    <property type="method" value="EM"/>
    <property type="resolution" value="3.00 A"/>
    <property type="chains" value="D=1-356"/>
</dbReference>
<dbReference type="PDB" id="8Q5H">
    <property type="method" value="EM"/>
    <property type="resolution" value="4.50 A"/>
    <property type="chains" value="D=1-356"/>
</dbReference>
<dbReference type="PDBsum" id="5LSI"/>
<dbReference type="PDBsum" id="5LSJ"/>
<dbReference type="PDBsum" id="5LSK"/>
<dbReference type="PDBsum" id="8PPR"/>
<dbReference type="PDBsum" id="8Q5H"/>
<dbReference type="EMDB" id="EMD-17814"/>
<dbReference type="EMDB" id="EMD-18179"/>
<dbReference type="EMDB" id="EMD-2549"/>
<dbReference type="SMR" id="Q9H410"/>
<dbReference type="BioGRID" id="123045">
    <property type="interactions" value="105"/>
</dbReference>
<dbReference type="ComplexPortal" id="CPX-5643">
    <property type="entry name" value="Kinetochore MIS12 complex"/>
</dbReference>
<dbReference type="CORUM" id="Q9H410"/>
<dbReference type="FunCoup" id="Q9H410">
    <property type="interactions" value="2100"/>
</dbReference>
<dbReference type="IntAct" id="Q9H410">
    <property type="interactions" value="80"/>
</dbReference>
<dbReference type="MINT" id="Q9H410"/>
<dbReference type="STRING" id="9606.ENSP00000389810"/>
<dbReference type="GlyGen" id="Q9H410">
    <property type="glycosylation" value="2 sites, 1 O-linked glycan (2 sites)"/>
</dbReference>
<dbReference type="iPTMnet" id="Q9H410"/>
<dbReference type="MetOSite" id="Q9H410"/>
<dbReference type="PhosphoSitePlus" id="Q9H410"/>
<dbReference type="BioMuta" id="DSN1"/>
<dbReference type="DMDM" id="28201793"/>
<dbReference type="jPOST" id="Q9H410"/>
<dbReference type="MassIVE" id="Q9H410"/>
<dbReference type="PaxDb" id="9606-ENSP00000389810"/>
<dbReference type="PeptideAtlas" id="Q9H410"/>
<dbReference type="ProteomicsDB" id="5379"/>
<dbReference type="ProteomicsDB" id="80777">
    <molecule id="Q9H410-1"/>
</dbReference>
<dbReference type="ProteomicsDB" id="80778">
    <molecule id="Q9H410-2"/>
</dbReference>
<dbReference type="ProteomicsDB" id="80779">
    <molecule id="Q9H410-3"/>
</dbReference>
<dbReference type="Pumba" id="Q9H410"/>
<dbReference type="Antibodypedia" id="1232">
    <property type="antibodies" value="182 antibodies from 26 providers"/>
</dbReference>
<dbReference type="DNASU" id="79980"/>
<dbReference type="Ensembl" id="ENST00000373734.8">
    <molecule id="Q9H410-3"/>
    <property type="protein sequence ID" value="ENSP00000362839.4"/>
    <property type="gene ID" value="ENSG00000149636.16"/>
</dbReference>
<dbReference type="Ensembl" id="ENST00000373750.9">
    <molecule id="Q9H410-1"/>
    <property type="protein sequence ID" value="ENSP00000362855.4"/>
    <property type="gene ID" value="ENSG00000149636.16"/>
</dbReference>
<dbReference type="Ensembl" id="ENST00000426836.5">
    <molecule id="Q9H410-1"/>
    <property type="protein sequence ID" value="ENSP00000389810.1"/>
    <property type="gene ID" value="ENSG00000149636.16"/>
</dbReference>
<dbReference type="Ensembl" id="ENST00000448110.6">
    <molecule id="Q9H410-4"/>
    <property type="protein sequence ID" value="ENSP00000404463.1"/>
    <property type="gene ID" value="ENSG00000149636.16"/>
</dbReference>
<dbReference type="GeneID" id="79980"/>
<dbReference type="KEGG" id="hsa:79980"/>
<dbReference type="MANE-Select" id="ENST00000373750.9">
    <property type="protein sequence ID" value="ENSP00000362855.4"/>
    <property type="RefSeq nucleotide sequence ID" value="NM_001145315.2"/>
    <property type="RefSeq protein sequence ID" value="NP_001138787.1"/>
</dbReference>
<dbReference type="UCSC" id="uc002xga.4">
    <molecule id="Q9H410-1"/>
    <property type="organism name" value="human"/>
</dbReference>
<dbReference type="AGR" id="HGNC:16165"/>
<dbReference type="CTD" id="79980"/>
<dbReference type="DisGeNET" id="79980"/>
<dbReference type="GeneCards" id="DSN1"/>
<dbReference type="HGNC" id="HGNC:16165">
    <property type="gene designation" value="DSN1"/>
</dbReference>
<dbReference type="HPA" id="ENSG00000149636">
    <property type="expression patterns" value="Low tissue specificity"/>
</dbReference>
<dbReference type="MIM" id="609175">
    <property type="type" value="gene"/>
</dbReference>
<dbReference type="neXtProt" id="NX_Q9H410"/>
<dbReference type="OpenTargets" id="ENSG00000149636"/>
<dbReference type="PharmGKB" id="PA162384106"/>
<dbReference type="VEuPathDB" id="HostDB:ENSG00000149636"/>
<dbReference type="eggNOG" id="ENOG502S0JV">
    <property type="taxonomic scope" value="Eukaryota"/>
</dbReference>
<dbReference type="GeneTree" id="ENSGT00390000011347"/>
<dbReference type="HOGENOM" id="CLU_042801_0_0_1"/>
<dbReference type="InParanoid" id="Q9H410"/>
<dbReference type="OMA" id="QDKSQSW"/>
<dbReference type="OrthoDB" id="10044040at2759"/>
<dbReference type="PAN-GO" id="Q9H410">
    <property type="GO annotations" value="2 GO annotations based on evolutionary models"/>
</dbReference>
<dbReference type="PhylomeDB" id="Q9H410"/>
<dbReference type="TreeFam" id="TF335504"/>
<dbReference type="PathwayCommons" id="Q9H410"/>
<dbReference type="Reactome" id="R-HSA-141444">
    <property type="pathway name" value="Amplification of signal from unattached kinetochores via a MAD2 inhibitory signal"/>
</dbReference>
<dbReference type="Reactome" id="R-HSA-2467813">
    <property type="pathway name" value="Separation of Sister Chromatids"/>
</dbReference>
<dbReference type="Reactome" id="R-HSA-2500257">
    <property type="pathway name" value="Resolution of Sister Chromatid Cohesion"/>
</dbReference>
<dbReference type="Reactome" id="R-HSA-5663220">
    <property type="pathway name" value="RHO GTPases Activate Formins"/>
</dbReference>
<dbReference type="Reactome" id="R-HSA-6798695">
    <property type="pathway name" value="Neutrophil degranulation"/>
</dbReference>
<dbReference type="Reactome" id="R-HSA-68877">
    <property type="pathway name" value="Mitotic Prometaphase"/>
</dbReference>
<dbReference type="Reactome" id="R-HSA-9648025">
    <property type="pathway name" value="EML4 and NUDC in mitotic spindle formation"/>
</dbReference>
<dbReference type="SignaLink" id="Q9H410"/>
<dbReference type="SIGNOR" id="Q9H410"/>
<dbReference type="BioGRID-ORCS" id="79980">
    <property type="hits" value="695 hits in 1173 CRISPR screens"/>
</dbReference>
<dbReference type="ChiTaRS" id="DSN1">
    <property type="organism name" value="human"/>
</dbReference>
<dbReference type="GeneWiki" id="DSN1"/>
<dbReference type="GenomeRNAi" id="79980"/>
<dbReference type="Pharos" id="Q9H410">
    <property type="development level" value="Tbio"/>
</dbReference>
<dbReference type="PRO" id="PR:Q9H410"/>
<dbReference type="Proteomes" id="UP000005640">
    <property type="component" value="Chromosome 20"/>
</dbReference>
<dbReference type="RNAct" id="Q9H410">
    <property type="molecule type" value="protein"/>
</dbReference>
<dbReference type="Bgee" id="ENSG00000149636">
    <property type="expression patterns" value="Expressed in primordial germ cell in gonad and 134 other cell types or tissues"/>
</dbReference>
<dbReference type="ExpressionAtlas" id="Q9H410">
    <property type="expression patterns" value="baseline and differential"/>
</dbReference>
<dbReference type="GO" id="GO:0035578">
    <property type="term" value="C:azurophil granule lumen"/>
    <property type="evidence" value="ECO:0000304"/>
    <property type="project" value="Reactome"/>
</dbReference>
<dbReference type="GO" id="GO:0005829">
    <property type="term" value="C:cytosol"/>
    <property type="evidence" value="ECO:0000314"/>
    <property type="project" value="HPA"/>
</dbReference>
<dbReference type="GO" id="GO:0005576">
    <property type="term" value="C:extracellular region"/>
    <property type="evidence" value="ECO:0000304"/>
    <property type="project" value="Reactome"/>
</dbReference>
<dbReference type="GO" id="GO:0001650">
    <property type="term" value="C:fibrillar center"/>
    <property type="evidence" value="ECO:0000314"/>
    <property type="project" value="HPA"/>
</dbReference>
<dbReference type="GO" id="GO:0000776">
    <property type="term" value="C:kinetochore"/>
    <property type="evidence" value="ECO:0000314"/>
    <property type="project" value="HPA"/>
</dbReference>
<dbReference type="GO" id="GO:0000444">
    <property type="term" value="C:MIS12/MIND type complex"/>
    <property type="evidence" value="ECO:0000314"/>
    <property type="project" value="UniProtKB"/>
</dbReference>
<dbReference type="GO" id="GO:0016604">
    <property type="term" value="C:nuclear body"/>
    <property type="evidence" value="ECO:0000314"/>
    <property type="project" value="HPA"/>
</dbReference>
<dbReference type="GO" id="GO:0005730">
    <property type="term" value="C:nucleolus"/>
    <property type="evidence" value="ECO:0000314"/>
    <property type="project" value="HPA"/>
</dbReference>
<dbReference type="GO" id="GO:0005654">
    <property type="term" value="C:nucleoplasm"/>
    <property type="evidence" value="ECO:0000314"/>
    <property type="project" value="HPA"/>
</dbReference>
<dbReference type="GO" id="GO:0005634">
    <property type="term" value="C:nucleus"/>
    <property type="evidence" value="ECO:0000303"/>
    <property type="project" value="ComplexPortal"/>
</dbReference>
<dbReference type="GO" id="GO:0000940">
    <property type="term" value="C:outer kinetochore"/>
    <property type="evidence" value="ECO:0000314"/>
    <property type="project" value="UniProtKB"/>
</dbReference>
<dbReference type="GO" id="GO:0000922">
    <property type="term" value="C:spindle pole"/>
    <property type="evidence" value="ECO:0000303"/>
    <property type="project" value="ComplexPortal"/>
</dbReference>
<dbReference type="GO" id="GO:0008608">
    <property type="term" value="P:attachment of spindle microtubules to kinetochore"/>
    <property type="evidence" value="ECO:0000303"/>
    <property type="project" value="ComplexPortal"/>
</dbReference>
<dbReference type="GO" id="GO:0051301">
    <property type="term" value="P:cell division"/>
    <property type="evidence" value="ECO:0007669"/>
    <property type="project" value="UniProtKB-KW"/>
</dbReference>
<dbReference type="GO" id="GO:0014841">
    <property type="term" value="P:skeletal muscle satellite cell proliferation"/>
    <property type="evidence" value="ECO:0007669"/>
    <property type="project" value="Ensembl"/>
</dbReference>
<dbReference type="InterPro" id="IPR013218">
    <property type="entry name" value="Dsn1/Mis13"/>
</dbReference>
<dbReference type="PANTHER" id="PTHR14778">
    <property type="entry name" value="KINETOCHORE-ASSOCIATED PROTEIN DSN1 HOMOLOG"/>
    <property type="match status" value="1"/>
</dbReference>
<dbReference type="PANTHER" id="PTHR14778:SF2">
    <property type="entry name" value="KINETOCHORE-ASSOCIATED PROTEIN DSN1 HOMOLOG"/>
    <property type="match status" value="1"/>
</dbReference>
<dbReference type="Pfam" id="PF08202">
    <property type="entry name" value="MIS13"/>
    <property type="match status" value="1"/>
</dbReference>
<accession>Q9H410</accession>
<accession>B4DWT2</accession>
<accession>E1P5U9</accession>
<accession>Q5JW55</accession>
<accession>Q5JW56</accession>
<accession>Q9H8P4</accession>
<gene>
    <name type="primary">DSN1</name>
    <name type="synonym">C20orf172</name>
    <name type="synonym">MIS13</name>
</gene>
<reference key="1">
    <citation type="journal article" date="2004" name="Nat. Genet.">
        <title>Complete sequencing and characterization of 21,243 full-length human cDNAs.</title>
        <authorList>
            <person name="Ota T."/>
            <person name="Suzuki Y."/>
            <person name="Nishikawa T."/>
            <person name="Otsuki T."/>
            <person name="Sugiyama T."/>
            <person name="Irie R."/>
            <person name="Wakamatsu A."/>
            <person name="Hayashi K."/>
            <person name="Sato H."/>
            <person name="Nagai K."/>
            <person name="Kimura K."/>
            <person name="Makita H."/>
            <person name="Sekine M."/>
            <person name="Obayashi M."/>
            <person name="Nishi T."/>
            <person name="Shibahara T."/>
            <person name="Tanaka T."/>
            <person name="Ishii S."/>
            <person name="Yamamoto J."/>
            <person name="Saito K."/>
            <person name="Kawai Y."/>
            <person name="Isono Y."/>
            <person name="Nakamura Y."/>
            <person name="Nagahari K."/>
            <person name="Murakami K."/>
            <person name="Yasuda T."/>
            <person name="Iwayanagi T."/>
            <person name="Wagatsuma M."/>
            <person name="Shiratori A."/>
            <person name="Sudo H."/>
            <person name="Hosoiri T."/>
            <person name="Kaku Y."/>
            <person name="Kodaira H."/>
            <person name="Kondo H."/>
            <person name="Sugawara M."/>
            <person name="Takahashi M."/>
            <person name="Kanda K."/>
            <person name="Yokoi T."/>
            <person name="Furuya T."/>
            <person name="Kikkawa E."/>
            <person name="Omura Y."/>
            <person name="Abe K."/>
            <person name="Kamihara K."/>
            <person name="Katsuta N."/>
            <person name="Sato K."/>
            <person name="Tanikawa M."/>
            <person name="Yamazaki M."/>
            <person name="Ninomiya K."/>
            <person name="Ishibashi T."/>
            <person name="Yamashita H."/>
            <person name="Murakawa K."/>
            <person name="Fujimori K."/>
            <person name="Tanai H."/>
            <person name="Kimata M."/>
            <person name="Watanabe M."/>
            <person name="Hiraoka S."/>
            <person name="Chiba Y."/>
            <person name="Ishida S."/>
            <person name="Ono Y."/>
            <person name="Takiguchi S."/>
            <person name="Watanabe S."/>
            <person name="Yosida M."/>
            <person name="Hotuta T."/>
            <person name="Kusano J."/>
            <person name="Kanehori K."/>
            <person name="Takahashi-Fujii A."/>
            <person name="Hara H."/>
            <person name="Tanase T.-O."/>
            <person name="Nomura Y."/>
            <person name="Togiya S."/>
            <person name="Komai F."/>
            <person name="Hara R."/>
            <person name="Takeuchi K."/>
            <person name="Arita M."/>
            <person name="Imose N."/>
            <person name="Musashino K."/>
            <person name="Yuuki H."/>
            <person name="Oshima A."/>
            <person name="Sasaki N."/>
            <person name="Aotsuka S."/>
            <person name="Yoshikawa Y."/>
            <person name="Matsunawa H."/>
            <person name="Ichihara T."/>
            <person name="Shiohata N."/>
            <person name="Sano S."/>
            <person name="Moriya S."/>
            <person name="Momiyama H."/>
            <person name="Satoh N."/>
            <person name="Takami S."/>
            <person name="Terashima Y."/>
            <person name="Suzuki O."/>
            <person name="Nakagawa S."/>
            <person name="Senoh A."/>
            <person name="Mizoguchi H."/>
            <person name="Goto Y."/>
            <person name="Shimizu F."/>
            <person name="Wakebe H."/>
            <person name="Hishigaki H."/>
            <person name="Watanabe T."/>
            <person name="Sugiyama A."/>
            <person name="Takemoto M."/>
            <person name="Kawakami B."/>
            <person name="Yamazaki M."/>
            <person name="Watanabe K."/>
            <person name="Kumagai A."/>
            <person name="Itakura S."/>
            <person name="Fukuzumi Y."/>
            <person name="Fujimori Y."/>
            <person name="Komiyama M."/>
            <person name="Tashiro H."/>
            <person name="Tanigami A."/>
            <person name="Fujiwara T."/>
            <person name="Ono T."/>
            <person name="Yamada K."/>
            <person name="Fujii Y."/>
            <person name="Ozaki K."/>
            <person name="Hirao M."/>
            <person name="Ohmori Y."/>
            <person name="Kawabata A."/>
            <person name="Hikiji T."/>
            <person name="Kobatake N."/>
            <person name="Inagaki H."/>
            <person name="Ikema Y."/>
            <person name="Okamoto S."/>
            <person name="Okitani R."/>
            <person name="Kawakami T."/>
            <person name="Noguchi S."/>
            <person name="Itoh T."/>
            <person name="Shigeta K."/>
            <person name="Senba T."/>
            <person name="Matsumura K."/>
            <person name="Nakajima Y."/>
            <person name="Mizuno T."/>
            <person name="Morinaga M."/>
            <person name="Sasaki M."/>
            <person name="Togashi T."/>
            <person name="Oyama M."/>
            <person name="Hata H."/>
            <person name="Watanabe M."/>
            <person name="Komatsu T."/>
            <person name="Mizushima-Sugano J."/>
            <person name="Satoh T."/>
            <person name="Shirai Y."/>
            <person name="Takahashi Y."/>
            <person name="Nakagawa K."/>
            <person name="Okumura K."/>
            <person name="Nagase T."/>
            <person name="Nomura N."/>
            <person name="Kikuchi H."/>
            <person name="Masuho Y."/>
            <person name="Yamashita R."/>
            <person name="Nakai K."/>
            <person name="Yada T."/>
            <person name="Nakamura Y."/>
            <person name="Ohara O."/>
            <person name="Isogai T."/>
            <person name="Sugano S."/>
        </authorList>
    </citation>
    <scope>NUCLEOTIDE SEQUENCE [LARGE SCALE MRNA] (ISOFORMS 1; 2; 3 AND 4)</scope>
    <source>
        <tissue>Esophageal carcinoma</tissue>
        <tissue>Esophagus</tissue>
        <tissue>Ovarian carcinoma</tissue>
        <tissue>Testis</tissue>
    </source>
</reference>
<reference key="2">
    <citation type="journal article" date="2001" name="Nature">
        <title>The DNA sequence and comparative analysis of human chromosome 20.</title>
        <authorList>
            <person name="Deloukas P."/>
            <person name="Matthews L.H."/>
            <person name="Ashurst J.L."/>
            <person name="Burton J."/>
            <person name="Gilbert J.G.R."/>
            <person name="Jones M."/>
            <person name="Stavrides G."/>
            <person name="Almeida J.P."/>
            <person name="Babbage A.K."/>
            <person name="Bagguley C.L."/>
            <person name="Bailey J."/>
            <person name="Barlow K.F."/>
            <person name="Bates K.N."/>
            <person name="Beard L.M."/>
            <person name="Beare D.M."/>
            <person name="Beasley O.P."/>
            <person name="Bird C.P."/>
            <person name="Blakey S.E."/>
            <person name="Bridgeman A.M."/>
            <person name="Brown A.J."/>
            <person name="Buck D."/>
            <person name="Burrill W.D."/>
            <person name="Butler A.P."/>
            <person name="Carder C."/>
            <person name="Carter N.P."/>
            <person name="Chapman J.C."/>
            <person name="Clamp M."/>
            <person name="Clark G."/>
            <person name="Clark L.N."/>
            <person name="Clark S.Y."/>
            <person name="Clee C.M."/>
            <person name="Clegg S."/>
            <person name="Cobley V.E."/>
            <person name="Collier R.E."/>
            <person name="Connor R.E."/>
            <person name="Corby N.R."/>
            <person name="Coulson A."/>
            <person name="Coville G.J."/>
            <person name="Deadman R."/>
            <person name="Dhami P.D."/>
            <person name="Dunn M."/>
            <person name="Ellington A.G."/>
            <person name="Frankland J.A."/>
            <person name="Fraser A."/>
            <person name="French L."/>
            <person name="Garner P."/>
            <person name="Grafham D.V."/>
            <person name="Griffiths C."/>
            <person name="Griffiths M.N.D."/>
            <person name="Gwilliam R."/>
            <person name="Hall R.E."/>
            <person name="Hammond S."/>
            <person name="Harley J.L."/>
            <person name="Heath P.D."/>
            <person name="Ho S."/>
            <person name="Holden J.L."/>
            <person name="Howden P.J."/>
            <person name="Huckle E."/>
            <person name="Hunt A.R."/>
            <person name="Hunt S.E."/>
            <person name="Jekosch K."/>
            <person name="Johnson C.M."/>
            <person name="Johnson D."/>
            <person name="Kay M.P."/>
            <person name="Kimberley A.M."/>
            <person name="King A."/>
            <person name="Knights A."/>
            <person name="Laird G.K."/>
            <person name="Lawlor S."/>
            <person name="Lehvaeslaiho M.H."/>
            <person name="Leversha M.A."/>
            <person name="Lloyd C."/>
            <person name="Lloyd D.M."/>
            <person name="Lovell J.D."/>
            <person name="Marsh V.L."/>
            <person name="Martin S.L."/>
            <person name="McConnachie L.J."/>
            <person name="McLay K."/>
            <person name="McMurray A.A."/>
            <person name="Milne S.A."/>
            <person name="Mistry D."/>
            <person name="Moore M.J.F."/>
            <person name="Mullikin J.C."/>
            <person name="Nickerson T."/>
            <person name="Oliver K."/>
            <person name="Parker A."/>
            <person name="Patel R."/>
            <person name="Pearce T.A.V."/>
            <person name="Peck A.I."/>
            <person name="Phillimore B.J.C.T."/>
            <person name="Prathalingam S.R."/>
            <person name="Plumb R.W."/>
            <person name="Ramsay H."/>
            <person name="Rice C.M."/>
            <person name="Ross M.T."/>
            <person name="Scott C.E."/>
            <person name="Sehra H.K."/>
            <person name="Shownkeen R."/>
            <person name="Sims S."/>
            <person name="Skuce C.D."/>
            <person name="Smith M.L."/>
            <person name="Soderlund C."/>
            <person name="Steward C.A."/>
            <person name="Sulston J.E."/>
            <person name="Swann R.M."/>
            <person name="Sycamore N."/>
            <person name="Taylor R."/>
            <person name="Tee L."/>
            <person name="Thomas D.W."/>
            <person name="Thorpe A."/>
            <person name="Tracey A."/>
            <person name="Tromans A.C."/>
            <person name="Vaudin M."/>
            <person name="Wall M."/>
            <person name="Wallis J.M."/>
            <person name="Whitehead S.L."/>
            <person name="Whittaker P."/>
            <person name="Willey D.L."/>
            <person name="Williams L."/>
            <person name="Williams S.A."/>
            <person name="Wilming L."/>
            <person name="Wray P.W."/>
            <person name="Hubbard T."/>
            <person name="Durbin R.M."/>
            <person name="Bentley D.R."/>
            <person name="Beck S."/>
            <person name="Rogers J."/>
        </authorList>
    </citation>
    <scope>NUCLEOTIDE SEQUENCE [LARGE SCALE GENOMIC DNA]</scope>
</reference>
<reference key="3">
    <citation type="submission" date="2005-09" db="EMBL/GenBank/DDBJ databases">
        <authorList>
            <person name="Mural R.J."/>
            <person name="Istrail S."/>
            <person name="Sutton G.G."/>
            <person name="Florea L."/>
            <person name="Halpern A.L."/>
            <person name="Mobarry C.M."/>
            <person name="Lippert R."/>
            <person name="Walenz B."/>
            <person name="Shatkay H."/>
            <person name="Dew I."/>
            <person name="Miller J.R."/>
            <person name="Flanigan M.J."/>
            <person name="Edwards N.J."/>
            <person name="Bolanos R."/>
            <person name="Fasulo D."/>
            <person name="Halldorsson B.V."/>
            <person name="Hannenhalli S."/>
            <person name="Turner R."/>
            <person name="Yooseph S."/>
            <person name="Lu F."/>
            <person name="Nusskern D.R."/>
            <person name="Shue B.C."/>
            <person name="Zheng X.H."/>
            <person name="Zhong F."/>
            <person name="Delcher A.L."/>
            <person name="Huson D.H."/>
            <person name="Kravitz S.A."/>
            <person name="Mouchard L."/>
            <person name="Reinert K."/>
            <person name="Remington K.A."/>
            <person name="Clark A.G."/>
            <person name="Waterman M.S."/>
            <person name="Eichler E.E."/>
            <person name="Adams M.D."/>
            <person name="Hunkapiller M.W."/>
            <person name="Myers E.W."/>
            <person name="Venter J.C."/>
        </authorList>
    </citation>
    <scope>NUCLEOTIDE SEQUENCE [LARGE SCALE GENOMIC DNA]</scope>
</reference>
<reference key="4">
    <citation type="journal article" date="2004" name="Genome Res.">
        <title>The status, quality, and expansion of the NIH full-length cDNA project: the Mammalian Gene Collection (MGC).</title>
        <authorList>
            <consortium name="The MGC Project Team"/>
        </authorList>
    </citation>
    <scope>NUCLEOTIDE SEQUENCE [LARGE SCALE MRNA] (ISOFORM 1)</scope>
    <source>
        <tissue>Skin</tissue>
    </source>
</reference>
<reference key="5">
    <citation type="journal article" date="2004" name="Nat. Cell Biol.">
        <title>A conserved Mis12 centromere complex is linked to heterochromatic HP1 and outer kinetochore protein Zwint-1.</title>
        <authorList>
            <person name="Obuse C."/>
            <person name="Iwasaki O."/>
            <person name="Kiyomitsu T."/>
            <person name="Goshima G."/>
            <person name="Toyoda Y."/>
            <person name="Yanagida M."/>
        </authorList>
    </citation>
    <scope>FUNCTION</scope>
    <scope>INTERACTION WITH MIS12; KNL1; CBX3; CBX5; NSL1 AND PMF1</scope>
    <scope>SUBCELLULAR LOCATION</scope>
</reference>
<reference key="6">
    <citation type="journal article" date="2006" name="J. Cell Biol.">
        <title>The human Mis12 complex is required for kinetochore assembly and proper chromosome segregation.</title>
        <authorList>
            <person name="Kline S.L."/>
            <person name="Cheeseman I.M."/>
            <person name="Hori T."/>
            <person name="Fukagawa T."/>
            <person name="Desai A."/>
        </authorList>
    </citation>
    <scope>FUNCTION</scope>
    <scope>COMPONENT OF MIS12 COMPLEX</scope>
    <scope>SUBCELLULAR LOCATION</scope>
</reference>
<reference key="7">
    <citation type="journal article" date="2007" name="Dev. Cell">
        <title>Human Blinkin/AF15q14 is required for chromosome alignment and the mitotic checkpoint through direct interaction with Bub1 and BubR1.</title>
        <authorList>
            <person name="Kiyomitsu T."/>
            <person name="Obuse C."/>
            <person name="Yanagida M."/>
        </authorList>
    </citation>
    <scope>INTERACTION WITH KNL1</scope>
</reference>
<reference key="8">
    <citation type="journal article" date="2008" name="J. Proteome Res.">
        <title>Combining protein-based IMAC, peptide-based IMAC, and MudPIT for efficient phosphoproteomic analysis.</title>
        <authorList>
            <person name="Cantin G.T."/>
            <person name="Yi W."/>
            <person name="Lu B."/>
            <person name="Park S.K."/>
            <person name="Xu T."/>
            <person name="Lee J.-D."/>
            <person name="Yates J.R. III"/>
        </authorList>
    </citation>
    <scope>IDENTIFICATION BY MASS SPECTROMETRY [LARGE SCALE ANALYSIS]</scope>
    <source>
        <tissue>Cervix carcinoma</tissue>
    </source>
</reference>
<reference key="9">
    <citation type="journal article" date="2008" name="Proc. Natl. Acad. Sci. U.S.A.">
        <title>A quantitative atlas of mitotic phosphorylation.</title>
        <authorList>
            <person name="Dephoure N."/>
            <person name="Zhou C."/>
            <person name="Villen J."/>
            <person name="Beausoleil S.A."/>
            <person name="Bakalarski C.E."/>
            <person name="Elledge S.J."/>
            <person name="Gygi S.P."/>
        </authorList>
    </citation>
    <scope>PHOSPHORYLATION [LARGE SCALE ANALYSIS] AT SER-28; SER-30; SER-77 AND SER-81</scope>
    <scope>IDENTIFICATION BY MASS SPECTROMETRY [LARGE SCALE ANALYSIS]</scope>
    <source>
        <tissue>Cervix carcinoma</tissue>
    </source>
</reference>
<reference key="10">
    <citation type="journal article" date="2009" name="Mol. Cell. Proteomics">
        <title>Large-scale proteomics analysis of the human kinome.</title>
        <authorList>
            <person name="Oppermann F.S."/>
            <person name="Gnad F."/>
            <person name="Olsen J.V."/>
            <person name="Hornberger R."/>
            <person name="Greff Z."/>
            <person name="Keri G."/>
            <person name="Mann M."/>
            <person name="Daub H."/>
        </authorList>
    </citation>
    <scope>IDENTIFICATION BY MASS SPECTROMETRY [LARGE SCALE ANALYSIS]</scope>
</reference>
<reference key="11">
    <citation type="journal article" date="2009" name="Sci. Signal.">
        <title>Quantitative phosphoproteomic analysis of T cell receptor signaling reveals system-wide modulation of protein-protein interactions.</title>
        <authorList>
            <person name="Mayya V."/>
            <person name="Lundgren D.H."/>
            <person name="Hwang S.-I."/>
            <person name="Rezaul K."/>
            <person name="Wu L."/>
            <person name="Eng J.K."/>
            <person name="Rodionov V."/>
            <person name="Han D.K."/>
        </authorList>
    </citation>
    <scope>PHOSPHORYLATION [LARGE SCALE ANALYSIS] AT SER-30</scope>
    <scope>IDENTIFICATION BY MASS SPECTROMETRY [LARGE SCALE ANALYSIS]</scope>
    <source>
        <tissue>Leukemic T-cell</tissue>
    </source>
</reference>
<reference key="12">
    <citation type="journal article" date="2010" name="Sci. Signal.">
        <title>Quantitative phosphoproteomics reveals widespread full phosphorylation site occupancy during mitosis.</title>
        <authorList>
            <person name="Olsen J.V."/>
            <person name="Vermeulen M."/>
            <person name="Santamaria A."/>
            <person name="Kumar C."/>
            <person name="Miller M.L."/>
            <person name="Jensen L.J."/>
            <person name="Gnad F."/>
            <person name="Cox J."/>
            <person name="Jensen T.S."/>
            <person name="Nigg E.A."/>
            <person name="Brunak S."/>
            <person name="Mann M."/>
        </authorList>
    </citation>
    <scope>PHOSPHORYLATION [LARGE SCALE ANALYSIS] AT SER-30; SER-58 AND SER-81</scope>
    <scope>IDENTIFICATION BY MASS SPECTROMETRY [LARGE SCALE ANALYSIS]</scope>
    <source>
        <tissue>Cervix carcinoma</tissue>
    </source>
</reference>
<reference key="13">
    <citation type="journal article" date="2012" name="J. Biol. Chem.">
        <title>Mitotic regulator SKAP forms a link between kinetochore core complex KMN and dynamic spindle microtubules.</title>
        <authorList>
            <person name="Wang X."/>
            <person name="Zhuang X."/>
            <person name="Cao D."/>
            <person name="Chu Y."/>
            <person name="Yao P."/>
            <person name="Liu W."/>
            <person name="Liu L."/>
            <person name="Adams G."/>
            <person name="Fang G."/>
            <person name="Dou Z."/>
            <person name="Ding X."/>
            <person name="Huang Y."/>
            <person name="Wang D."/>
            <person name="Yao X."/>
        </authorList>
    </citation>
    <scope>INTERACTION WITH KNSTRN</scope>
</reference>
<reference key="14">
    <citation type="journal article" date="2013" name="J. Proteome Res.">
        <title>Toward a comprehensive characterization of a human cancer cell phosphoproteome.</title>
        <authorList>
            <person name="Zhou H."/>
            <person name="Di Palma S."/>
            <person name="Preisinger C."/>
            <person name="Peng M."/>
            <person name="Polat A.N."/>
            <person name="Heck A.J."/>
            <person name="Mohammed S."/>
        </authorList>
    </citation>
    <scope>PHOSPHORYLATION [LARGE SCALE ANALYSIS] AT SER-30; SER-77; SER-81; SER-109; SER-125 AND SER-331</scope>
    <scope>IDENTIFICATION BY MASS SPECTROMETRY [LARGE SCALE ANALYSIS]</scope>
    <source>
        <tissue>Cervix carcinoma</tissue>
        <tissue>Erythroleukemia</tissue>
    </source>
</reference>
<reference key="15">
    <citation type="journal article" date="2017" name="Nat. Struct. Mol. Biol.">
        <title>Site-specific mapping of the human SUMO proteome reveals co-modification with phosphorylation.</title>
        <authorList>
            <person name="Hendriks I.A."/>
            <person name="Lyon D."/>
            <person name="Young C."/>
            <person name="Jensen L.J."/>
            <person name="Vertegaal A.C."/>
            <person name="Nielsen M.L."/>
        </authorList>
    </citation>
    <scope>SUMOYLATION [LARGE SCALE ANALYSIS] AT LYS-253</scope>
    <scope>IDENTIFICATION BY MASS SPECTROMETRY [LARGE SCALE ANALYSIS]</scope>
</reference>
<proteinExistence type="evidence at protein level"/>
<comment type="function">
    <text evidence="2 3">Part of the MIS12 complex which is required for normal chromosome alignment and segregation and kinetochore formation during mitosis.</text>
</comment>
<comment type="subunit">
    <text evidence="2 4 5">Component of the MIS12 complex composed of MIS12, DSN1, NSL1 and PMF1. Also interacts with KNL1, CBX3 and CBX5. Interacts with KNSTRN.</text>
</comment>
<comment type="interaction">
    <interactant intactId="EBI-1001144">
        <id>Q9H410</id>
    </interactant>
    <interactant intactId="EBI-1044810">
        <id>P24539</id>
        <label>ATP5PB</label>
    </interactant>
    <organismsDiffer>false</organismsDiffer>
    <experiments>3</experiments>
</comment>
<comment type="interaction">
    <interactant intactId="EBI-1001144">
        <id>Q9H410</id>
    </interactant>
    <interactant intactId="EBI-10988864">
        <id>P46379-2</id>
        <label>BAG6</label>
    </interactant>
    <organismsDiffer>false</organismsDiffer>
    <experiments>3</experiments>
</comment>
<comment type="interaction">
    <interactant intactId="EBI-1001144">
        <id>Q9H410</id>
    </interactant>
    <interactant intactId="EBI-762076">
        <id>P21810</id>
        <label>BGN</label>
    </interactant>
    <organismsDiffer>false</organismsDiffer>
    <experiments>3</experiments>
</comment>
<comment type="interaction">
    <interactant intactId="EBI-1001144">
        <id>Q9H410</id>
    </interactant>
    <interactant intactId="EBI-21553822">
        <id>Q96A83-2</id>
        <label>COL26A1</label>
    </interactant>
    <organismsDiffer>false</organismsDiffer>
    <experiments>3</experiments>
</comment>
<comment type="interaction">
    <interactant intactId="EBI-1001144">
        <id>Q9H410</id>
    </interactant>
    <interactant intactId="EBI-740220">
        <id>O14964</id>
        <label>HGS</label>
    </interactant>
    <organismsDiffer>false</organismsDiffer>
    <experiments>3</experiments>
</comment>
<comment type="interaction">
    <interactant intactId="EBI-1001144">
        <id>Q9H410</id>
    </interactant>
    <interactant intactId="EBI-6398041">
        <id>Q9UMF0</id>
        <label>ICAM5</label>
    </interactant>
    <organismsDiffer>false</organismsDiffer>
    <experiments>3</experiments>
</comment>
<comment type="interaction">
    <interactant intactId="EBI-1001144">
        <id>Q9H410</id>
    </interactant>
    <interactant intactId="EBI-948266">
        <id>O14901</id>
        <label>KLF11</label>
    </interactant>
    <organismsDiffer>false</organismsDiffer>
    <experiments>3</experiments>
</comment>
<comment type="interaction">
    <interactant intactId="EBI-1001144">
        <id>Q9H410</id>
    </interactant>
    <interactant intactId="EBI-1001205">
        <id>Q9H081</id>
        <label>MIS12</label>
    </interactant>
    <organismsDiffer>false</organismsDiffer>
    <experiments>16</experiments>
</comment>
<comment type="interaction">
    <interactant intactId="EBI-1001144">
        <id>Q9H410</id>
    </interactant>
    <interactant intactId="EBI-2554690">
        <id>Q96IY1</id>
        <label>NSL1</label>
    </interactant>
    <organismsDiffer>false</organismsDiffer>
    <experiments>28</experiments>
</comment>
<comment type="interaction">
    <interactant intactId="EBI-1001144">
        <id>Q9H410</id>
    </interactant>
    <interactant intactId="EBI-2811583">
        <id>Q9BVL2</id>
        <label>NUP58</label>
    </interactant>
    <organismsDiffer>false</organismsDiffer>
    <experiments>3</experiments>
</comment>
<comment type="subcellular location">
    <subcellularLocation>
        <location evidence="2 3">Nucleus</location>
    </subcellularLocation>
    <subcellularLocation>
        <location evidence="2 3">Chromosome</location>
        <location evidence="2 3">Centromere</location>
        <location evidence="2 3">Kinetochore</location>
    </subcellularLocation>
    <text evidence="2 3">Associated with the kinetochore.</text>
</comment>
<comment type="alternative products">
    <event type="alternative splicing"/>
    <isoform>
        <id>Q9H410-1</id>
        <name>1</name>
        <sequence type="displayed"/>
    </isoform>
    <isoform>
        <id>Q9H410-2</id>
        <name>2</name>
        <sequence type="described" ref="VSP_003826"/>
    </isoform>
    <isoform>
        <id>Q9H410-4</id>
        <name>4</name>
        <sequence type="described" ref="VSP_044281"/>
    </isoform>
    <isoform>
        <id>Q9H410-3</id>
        <name>3</name>
        <sequence type="described" ref="VSP_043204"/>
    </isoform>
</comment>
<comment type="sequence caution" evidence="7">
    <conflict type="frameshift">
        <sequence resource="EMBL-CDS" id="BAB14564"/>
    </conflict>
</comment>